<sequence length="128" mass="14223">MKGYLWGGASVVLVTVAQLVLKWGMMNIPLLSLADINVQFLTMYFVQLASVMCGLMGYALSMLCWFFALRYLPLNRAYPLLSLSYALVYLGAVLLPWFNEPATLLKTLGAGFILLGIWLINIKPIKAS</sequence>
<keyword id="KW-0997">Cell inner membrane</keyword>
<keyword id="KW-1003">Cell membrane</keyword>
<keyword id="KW-0441">Lipid A biosynthesis</keyword>
<keyword id="KW-0444">Lipid biosynthesis</keyword>
<keyword id="KW-0443">Lipid metabolism</keyword>
<keyword id="KW-0448">Lipopolysaccharide biosynthesis</keyword>
<keyword id="KW-0472">Membrane</keyword>
<keyword id="KW-0812">Transmembrane</keyword>
<keyword id="KW-1133">Transmembrane helix</keyword>
<keyword id="KW-0813">Transport</keyword>
<feature type="chain" id="PRO_1000017390" description="Probable 4-amino-4-deoxy-L-arabinose-phosphoundecaprenol flippase subunit ArnF">
    <location>
        <begin position="1"/>
        <end position="128"/>
    </location>
</feature>
<feature type="topological domain" description="Cytoplasmic" evidence="1">
    <location>
        <begin position="1"/>
        <end position="10"/>
    </location>
</feature>
<feature type="transmembrane region" description="Helical" evidence="1">
    <location>
        <begin position="11"/>
        <end position="31"/>
    </location>
</feature>
<feature type="topological domain" description="Periplasmic" evidence="1">
    <location>
        <begin position="32"/>
        <end position="47"/>
    </location>
</feature>
<feature type="transmembrane region" description="Helical" evidence="1">
    <location>
        <begin position="48"/>
        <end position="68"/>
    </location>
</feature>
<feature type="topological domain" description="Cytoplasmic" evidence="1">
    <location>
        <begin position="69"/>
        <end position="77"/>
    </location>
</feature>
<feature type="transmembrane region" description="Helical" evidence="1">
    <location>
        <begin position="78"/>
        <end position="98"/>
    </location>
</feature>
<feature type="topological domain" description="Periplasmic" evidence="1">
    <location>
        <begin position="99"/>
        <end position="101"/>
    </location>
</feature>
<feature type="transmembrane region" description="Helical" evidence="1">
    <location>
        <begin position="102"/>
        <end position="122"/>
    </location>
</feature>
<feature type="topological domain" description="Cytoplasmic" evidence="1">
    <location>
        <begin position="123"/>
        <end position="128"/>
    </location>
</feature>
<gene>
    <name evidence="1" type="primary">arnF</name>
    <name type="ordered locus">YPN_1870</name>
    <name type="ORF">YP516_2081</name>
</gene>
<organism>
    <name type="scientific">Yersinia pestis bv. Antiqua (strain Nepal516)</name>
    <dbReference type="NCBI Taxonomy" id="377628"/>
    <lineage>
        <taxon>Bacteria</taxon>
        <taxon>Pseudomonadati</taxon>
        <taxon>Pseudomonadota</taxon>
        <taxon>Gammaproteobacteria</taxon>
        <taxon>Enterobacterales</taxon>
        <taxon>Yersiniaceae</taxon>
        <taxon>Yersinia</taxon>
    </lineage>
</organism>
<reference key="1">
    <citation type="journal article" date="2006" name="J. Bacteriol.">
        <title>Complete genome sequence of Yersinia pestis strains Antiqua and Nepal516: evidence of gene reduction in an emerging pathogen.</title>
        <authorList>
            <person name="Chain P.S.G."/>
            <person name="Hu P."/>
            <person name="Malfatti S.A."/>
            <person name="Radnedge L."/>
            <person name="Larimer F."/>
            <person name="Vergez L.M."/>
            <person name="Worsham P."/>
            <person name="Chu M.C."/>
            <person name="Andersen G.L."/>
        </authorList>
    </citation>
    <scope>NUCLEOTIDE SEQUENCE [LARGE SCALE GENOMIC DNA]</scope>
    <source>
        <strain>Nepal516</strain>
    </source>
</reference>
<reference key="2">
    <citation type="submission" date="2009-04" db="EMBL/GenBank/DDBJ databases">
        <title>Yersinia pestis Nepal516A whole genome shotgun sequencing project.</title>
        <authorList>
            <person name="Plunkett G. III"/>
            <person name="Anderson B.D."/>
            <person name="Baumler D.J."/>
            <person name="Burland V."/>
            <person name="Cabot E.L."/>
            <person name="Glasner J.D."/>
            <person name="Mau B."/>
            <person name="Neeno-Eckwall E."/>
            <person name="Perna N.T."/>
            <person name="Munk A.C."/>
            <person name="Tapia R."/>
            <person name="Green L.D."/>
            <person name="Rogers Y.C."/>
            <person name="Detter J.C."/>
            <person name="Bruce D.C."/>
            <person name="Brettin T.S."/>
        </authorList>
    </citation>
    <scope>NUCLEOTIDE SEQUENCE [LARGE SCALE GENOMIC DNA]</scope>
    <source>
        <strain>Nepal516</strain>
    </source>
</reference>
<name>ARNF_YERPN</name>
<proteinExistence type="inferred from homology"/>
<protein>
    <recommendedName>
        <fullName evidence="1">Probable 4-amino-4-deoxy-L-arabinose-phosphoundecaprenol flippase subunit ArnF</fullName>
        <shortName evidence="1">L-Ara4N-phosphoundecaprenol flippase subunit ArnF</shortName>
    </recommendedName>
    <alternativeName>
        <fullName evidence="1">Undecaprenyl phosphate-aminoarabinose flippase subunit ArnF</fullName>
    </alternativeName>
</protein>
<comment type="function">
    <text evidence="1">Translocates 4-amino-4-deoxy-L-arabinose-phosphoundecaprenol (alpha-L-Ara4N-phosphoundecaprenol) from the cytoplasmic to the periplasmic side of the inner membrane.</text>
</comment>
<comment type="pathway">
    <text evidence="1">Bacterial outer membrane biogenesis; lipopolysaccharide biosynthesis.</text>
</comment>
<comment type="subunit">
    <text evidence="1">Heterodimer of ArnE and ArnF.</text>
</comment>
<comment type="subcellular location">
    <subcellularLocation>
        <location evidence="1">Cell inner membrane</location>
        <topology evidence="1">Multi-pass membrane protein</topology>
    </subcellularLocation>
</comment>
<comment type="similarity">
    <text evidence="1">Belongs to the ArnF family.</text>
</comment>
<accession>Q1CII1</accession>
<accession>C4GTH3</accession>
<dbReference type="EMBL" id="CP000305">
    <property type="protein sequence ID" value="ABG18199.1"/>
    <property type="molecule type" value="Genomic_DNA"/>
</dbReference>
<dbReference type="EMBL" id="ACNQ01000010">
    <property type="protein sequence ID" value="EEO76774.1"/>
    <property type="molecule type" value="Genomic_DNA"/>
</dbReference>
<dbReference type="RefSeq" id="WP_002211819.1">
    <property type="nucleotide sequence ID" value="NZ_ACNQ01000010.1"/>
</dbReference>
<dbReference type="GeneID" id="57976261"/>
<dbReference type="KEGG" id="ypn:YPN_1870"/>
<dbReference type="HOGENOM" id="CLU_131462_1_0_6"/>
<dbReference type="UniPathway" id="UPA00030"/>
<dbReference type="Proteomes" id="UP000008936">
    <property type="component" value="Chromosome"/>
</dbReference>
<dbReference type="GO" id="GO:0005886">
    <property type="term" value="C:plasma membrane"/>
    <property type="evidence" value="ECO:0007669"/>
    <property type="project" value="UniProtKB-SubCell"/>
</dbReference>
<dbReference type="GO" id="GO:1901505">
    <property type="term" value="F:carbohydrate derivative transmembrane transporter activity"/>
    <property type="evidence" value="ECO:0007669"/>
    <property type="project" value="InterPro"/>
</dbReference>
<dbReference type="GO" id="GO:0009245">
    <property type="term" value="P:lipid A biosynthetic process"/>
    <property type="evidence" value="ECO:0007669"/>
    <property type="project" value="UniProtKB-UniRule"/>
</dbReference>
<dbReference type="GO" id="GO:0009103">
    <property type="term" value="P:lipopolysaccharide biosynthetic process"/>
    <property type="evidence" value="ECO:0007669"/>
    <property type="project" value="UniProtKB-UniRule"/>
</dbReference>
<dbReference type="Gene3D" id="1.10.3730.20">
    <property type="match status" value="1"/>
</dbReference>
<dbReference type="HAMAP" id="MF_00538">
    <property type="entry name" value="Flippase_ArnF"/>
    <property type="match status" value="1"/>
</dbReference>
<dbReference type="InterPro" id="IPR022832">
    <property type="entry name" value="Flippase_ArnF"/>
</dbReference>
<dbReference type="InterPro" id="IPR000390">
    <property type="entry name" value="Small_drug/metabolite_transptr"/>
</dbReference>
<dbReference type="NCBIfam" id="NF002816">
    <property type="entry name" value="PRK02971.1-2"/>
    <property type="match status" value="1"/>
</dbReference>
<dbReference type="PANTHER" id="PTHR30561:SF9">
    <property type="entry name" value="4-AMINO-4-DEOXY-L-ARABINOSE-PHOSPHOUNDECAPRENOL FLIPPASE SUBUNIT ARNF-RELATED"/>
    <property type="match status" value="1"/>
</dbReference>
<dbReference type="PANTHER" id="PTHR30561">
    <property type="entry name" value="SMR FAMILY PROTON-DEPENDENT DRUG EFFLUX TRANSPORTER SUGE"/>
    <property type="match status" value="1"/>
</dbReference>
<dbReference type="SUPFAM" id="SSF103481">
    <property type="entry name" value="Multidrug resistance efflux transporter EmrE"/>
    <property type="match status" value="1"/>
</dbReference>
<evidence type="ECO:0000255" key="1">
    <source>
        <dbReference type="HAMAP-Rule" id="MF_00538"/>
    </source>
</evidence>